<proteinExistence type="inferred from homology"/>
<accession>P0AFB4</accession>
<accession>P39833</accession>
<reference key="1">
    <citation type="journal article" date="2002" name="Nucleic Acids Res.">
        <title>Genome sequence of Shigella flexneri 2a: insights into pathogenicity through comparison with genomes of Escherichia coli K12 and O157.</title>
        <authorList>
            <person name="Jin Q."/>
            <person name="Yuan Z."/>
            <person name="Xu J."/>
            <person name="Wang Y."/>
            <person name="Shen Y."/>
            <person name="Lu W."/>
            <person name="Wang J."/>
            <person name="Liu H."/>
            <person name="Yang J."/>
            <person name="Yang F."/>
            <person name="Zhang X."/>
            <person name="Zhang J."/>
            <person name="Yang G."/>
            <person name="Wu H."/>
            <person name="Qu D."/>
            <person name="Dong J."/>
            <person name="Sun L."/>
            <person name="Xue Y."/>
            <person name="Zhao A."/>
            <person name="Gao Y."/>
            <person name="Zhu J."/>
            <person name="Kan B."/>
            <person name="Ding K."/>
            <person name="Chen S."/>
            <person name="Cheng H."/>
            <person name="Yao Z."/>
            <person name="He B."/>
            <person name="Chen R."/>
            <person name="Ma D."/>
            <person name="Qiang B."/>
            <person name="Wen Y."/>
            <person name="Hou Y."/>
            <person name="Yu J."/>
        </authorList>
    </citation>
    <scope>NUCLEOTIDE SEQUENCE [LARGE SCALE GENOMIC DNA]</scope>
    <source>
        <strain>301 / Serotype 2a</strain>
    </source>
</reference>
<reference key="2">
    <citation type="journal article" date="2003" name="Infect. Immun.">
        <title>Complete genome sequence and comparative genomics of Shigella flexneri serotype 2a strain 2457T.</title>
        <authorList>
            <person name="Wei J."/>
            <person name="Goldberg M.B."/>
            <person name="Burland V."/>
            <person name="Venkatesan M.M."/>
            <person name="Deng W."/>
            <person name="Fournier G."/>
            <person name="Mayhew G.F."/>
            <person name="Plunkett G. III"/>
            <person name="Rose D.J."/>
            <person name="Darling A."/>
            <person name="Mau B."/>
            <person name="Perna N.T."/>
            <person name="Payne S.M."/>
            <person name="Runyen-Janecky L.J."/>
            <person name="Zhou S."/>
            <person name="Schwartz D.C."/>
            <person name="Blattner F.R."/>
        </authorList>
    </citation>
    <scope>NUCLEOTIDE SEQUENCE [LARGE SCALE GENOMIC DNA]</scope>
    <source>
        <strain>ATCC 700930 / 2457T / Serotype 2a</strain>
    </source>
</reference>
<organism>
    <name type="scientific">Shigella flexneri</name>
    <dbReference type="NCBI Taxonomy" id="623"/>
    <lineage>
        <taxon>Bacteria</taxon>
        <taxon>Pseudomonadati</taxon>
        <taxon>Pseudomonadota</taxon>
        <taxon>Gammaproteobacteria</taxon>
        <taxon>Enterobacterales</taxon>
        <taxon>Enterobacteriaceae</taxon>
        <taxon>Shigella</taxon>
    </lineage>
</organism>
<comment type="function">
    <text evidence="1">May be involved in cell division. May play a role in bacterial septation or regulation of cell wall degradation during cell division (By similarity).</text>
</comment>
<comment type="subunit">
    <text evidence="1">Homodimer.</text>
</comment>
<comment type="subcellular location">
    <subcellularLocation>
        <location evidence="2">Cell membrane</location>
        <topology evidence="2">Lipid-anchor</topology>
    </subcellularLocation>
</comment>
<keyword id="KW-0131">Cell cycle</keyword>
<keyword id="KW-0132">Cell division</keyword>
<keyword id="KW-1003">Cell membrane</keyword>
<keyword id="KW-0449">Lipoprotein</keyword>
<keyword id="KW-0472">Membrane</keyword>
<keyword id="KW-0564">Palmitate</keyword>
<keyword id="KW-1185">Reference proteome</keyword>
<keyword id="KW-0677">Repeat</keyword>
<keyword id="KW-0732">Signal</keyword>
<keyword id="KW-0802">TPR repeat</keyword>
<dbReference type="EMBL" id="AE005674">
    <property type="protein sequence ID" value="AAN44671.2"/>
    <property type="molecule type" value="Genomic_DNA"/>
</dbReference>
<dbReference type="EMBL" id="AE014073">
    <property type="protein sequence ID" value="AAP18485.1"/>
    <property type="molecule type" value="Genomic_DNA"/>
</dbReference>
<dbReference type="RefSeq" id="WP_000802080.1">
    <property type="nucleotide sequence ID" value="NZ_WPGW01000004.1"/>
</dbReference>
<dbReference type="SMR" id="P0AFB4"/>
<dbReference type="STRING" id="198214.SF3204"/>
<dbReference type="PaxDb" id="198214-SF3204"/>
<dbReference type="GeneID" id="93778820"/>
<dbReference type="KEGG" id="sfl:SF3204"/>
<dbReference type="KEGG" id="sfx:S3421"/>
<dbReference type="PATRIC" id="fig|198214.7.peg.3804"/>
<dbReference type="HOGENOM" id="CLU_071600_0_0_6"/>
<dbReference type="Proteomes" id="UP000001006">
    <property type="component" value="Chromosome"/>
</dbReference>
<dbReference type="Proteomes" id="UP000002673">
    <property type="component" value="Chromosome"/>
</dbReference>
<dbReference type="GO" id="GO:0005886">
    <property type="term" value="C:plasma membrane"/>
    <property type="evidence" value="ECO:0007669"/>
    <property type="project" value="UniProtKB-SubCell"/>
</dbReference>
<dbReference type="GO" id="GO:0051301">
    <property type="term" value="P:cell division"/>
    <property type="evidence" value="ECO:0007669"/>
    <property type="project" value="UniProtKB-KW"/>
</dbReference>
<dbReference type="FunFam" id="1.25.40.10:FF:000021">
    <property type="entry name" value="Lipoprotein NlpI"/>
    <property type="match status" value="1"/>
</dbReference>
<dbReference type="Gene3D" id="1.25.40.10">
    <property type="entry name" value="Tetratricopeptide repeat domain"/>
    <property type="match status" value="1"/>
</dbReference>
<dbReference type="InterPro" id="IPR023605">
    <property type="entry name" value="Lipoprotein_NlpI"/>
</dbReference>
<dbReference type="InterPro" id="IPR011990">
    <property type="entry name" value="TPR-like_helical_dom_sf"/>
</dbReference>
<dbReference type="InterPro" id="IPR019734">
    <property type="entry name" value="TPR_rpt"/>
</dbReference>
<dbReference type="InterPro" id="IPR050498">
    <property type="entry name" value="Ycf3"/>
</dbReference>
<dbReference type="NCBIfam" id="NF008391">
    <property type="entry name" value="PRK11189.1"/>
    <property type="match status" value="1"/>
</dbReference>
<dbReference type="PANTHER" id="PTHR44858">
    <property type="entry name" value="TETRATRICOPEPTIDE REPEAT PROTEIN 6"/>
    <property type="match status" value="1"/>
</dbReference>
<dbReference type="PANTHER" id="PTHR44858:SF1">
    <property type="entry name" value="UDP-N-ACETYLGLUCOSAMINE--PEPTIDE N-ACETYLGLUCOSAMINYLTRANSFERASE SPINDLY-RELATED"/>
    <property type="match status" value="1"/>
</dbReference>
<dbReference type="Pfam" id="PF13432">
    <property type="entry name" value="TPR_16"/>
    <property type="match status" value="1"/>
</dbReference>
<dbReference type="PIRSF" id="PIRSF004654">
    <property type="entry name" value="NlpI"/>
    <property type="match status" value="1"/>
</dbReference>
<dbReference type="SMART" id="SM00028">
    <property type="entry name" value="TPR"/>
    <property type="match status" value="3"/>
</dbReference>
<dbReference type="SUPFAM" id="SSF48452">
    <property type="entry name" value="TPR-like"/>
    <property type="match status" value="1"/>
</dbReference>
<dbReference type="PROSITE" id="PS51257">
    <property type="entry name" value="PROKAR_LIPOPROTEIN"/>
    <property type="match status" value="1"/>
</dbReference>
<dbReference type="PROSITE" id="PS50005">
    <property type="entry name" value="TPR"/>
    <property type="match status" value="3"/>
</dbReference>
<dbReference type="PROSITE" id="PS50293">
    <property type="entry name" value="TPR_REGION"/>
    <property type="match status" value="2"/>
</dbReference>
<evidence type="ECO:0000250" key="1"/>
<evidence type="ECO:0000255" key="2">
    <source>
        <dbReference type="PROSITE-ProRule" id="PRU00303"/>
    </source>
</evidence>
<feature type="signal peptide" evidence="2">
    <location>
        <begin position="1"/>
        <end position="18"/>
    </location>
</feature>
<feature type="chain" id="PRO_0000045129" description="Lipoprotein NlpI">
    <location>
        <begin position="19"/>
        <end position="294"/>
    </location>
</feature>
<feature type="repeat" description="TPR 1">
    <location>
        <begin position="62"/>
        <end position="95"/>
    </location>
</feature>
<feature type="repeat" description="TPR 2">
    <location>
        <begin position="96"/>
        <end position="129"/>
    </location>
</feature>
<feature type="repeat" description="TPR 3">
    <location>
        <begin position="234"/>
        <end position="267"/>
    </location>
</feature>
<feature type="lipid moiety-binding region" description="N-palmitoyl cysteine" evidence="2">
    <location>
        <position position="19"/>
    </location>
</feature>
<feature type="lipid moiety-binding region" description="S-diacylglycerol cysteine" evidence="2">
    <location>
        <position position="19"/>
    </location>
</feature>
<gene>
    <name type="primary">nlpI</name>
    <name type="ordered locus">SF3204</name>
    <name type="ordered locus">S3421</name>
</gene>
<sequence>MKPFLRWCFVATALTLAGCSNTSWRKSEVLAVPLQPTLQQEVILARMEQILASRALTDDERAQLLYERGVLYDSLGLRALARNDFSQALAIRPDMPEVFNYLGIYLTQAGNFDAAYEAFDSVLELDPTYNYAHLNRGIALYYGGRDKLAQDDLLAFYQDDPNDPFRSLWLYLAEQKLDEKQAKEVLKQHFEKSDKEQWGWNIVEFYLGNISEQTLMERLKADATDNTSLAEHLSETNFYLGKYYLSLGDLDSATALFKLAVANNVHNFVEHRYALLELSLLGQDQDDLAESDQQ</sequence>
<protein>
    <recommendedName>
        <fullName>Lipoprotein NlpI</fullName>
    </recommendedName>
</protein>
<name>NLPI_SHIFL</name>